<accession>Q8DPN9</accession>
<name>LACA_STRR6</name>
<protein>
    <recommendedName>
        <fullName evidence="1">Galactose-6-phosphate isomerase subunit LacA</fullName>
        <ecNumber evidence="1">5.3.1.26</ecNumber>
    </recommendedName>
</protein>
<evidence type="ECO:0000255" key="1">
    <source>
        <dbReference type="HAMAP-Rule" id="MF_01555"/>
    </source>
</evidence>
<gene>
    <name evidence="1" type="primary">lacA</name>
    <name type="ordered locus">spr1076</name>
</gene>
<proteinExistence type="inferred from homology"/>
<comment type="catalytic activity">
    <reaction evidence="1">
        <text>aldehydo-D-galactose 6-phosphate = keto-D-tagatose 6-phosphate</text>
        <dbReference type="Rhea" id="RHEA:13033"/>
        <dbReference type="ChEBI" id="CHEBI:58255"/>
        <dbReference type="ChEBI" id="CHEBI:134283"/>
        <dbReference type="EC" id="5.3.1.26"/>
    </reaction>
</comment>
<comment type="pathway">
    <text evidence="1">Carbohydrate metabolism; D-galactose 6-phosphate degradation; D-tagatose 6-phosphate from D-galactose 6-phosphate: step 1/1.</text>
</comment>
<comment type="subunit">
    <text evidence="1">Heteromultimeric protein consisting of LacA and LacB.</text>
</comment>
<comment type="similarity">
    <text evidence="1">Belongs to the LacAB/RpiB family.</text>
</comment>
<dbReference type="EC" id="5.3.1.26" evidence="1"/>
<dbReference type="EMBL" id="AE007317">
    <property type="protein sequence ID" value="AAK99879.1"/>
    <property type="molecule type" value="Genomic_DNA"/>
</dbReference>
<dbReference type="PIR" id="C98006">
    <property type="entry name" value="C98006"/>
</dbReference>
<dbReference type="RefSeq" id="NP_358669.1">
    <property type="nucleotide sequence ID" value="NC_003098.1"/>
</dbReference>
<dbReference type="RefSeq" id="WP_000029272.1">
    <property type="nucleotide sequence ID" value="NC_003098.1"/>
</dbReference>
<dbReference type="SMR" id="Q8DPN9"/>
<dbReference type="STRING" id="171101.spr1076"/>
<dbReference type="GeneID" id="45653585"/>
<dbReference type="KEGG" id="spr:spr1076"/>
<dbReference type="PATRIC" id="fig|171101.6.peg.1168"/>
<dbReference type="eggNOG" id="COG0698">
    <property type="taxonomic scope" value="Bacteria"/>
</dbReference>
<dbReference type="HOGENOM" id="CLU_091396_4_2_9"/>
<dbReference type="UniPathway" id="UPA00702">
    <property type="reaction ID" value="UER00714"/>
</dbReference>
<dbReference type="Proteomes" id="UP000000586">
    <property type="component" value="Chromosome"/>
</dbReference>
<dbReference type="GO" id="GO:0050044">
    <property type="term" value="F:galactose-6-phosphate isomerase activity"/>
    <property type="evidence" value="ECO:0007669"/>
    <property type="project" value="UniProtKB-UniRule"/>
</dbReference>
<dbReference type="GO" id="GO:0004751">
    <property type="term" value="F:ribose-5-phosphate isomerase activity"/>
    <property type="evidence" value="ECO:0000318"/>
    <property type="project" value="GO_Central"/>
</dbReference>
<dbReference type="GO" id="GO:0019316">
    <property type="term" value="P:D-allose catabolic process"/>
    <property type="evidence" value="ECO:0000318"/>
    <property type="project" value="GO_Central"/>
</dbReference>
<dbReference type="GO" id="GO:0019388">
    <property type="term" value="P:galactose catabolic process"/>
    <property type="evidence" value="ECO:0007669"/>
    <property type="project" value="UniProtKB-UniPathway"/>
</dbReference>
<dbReference type="GO" id="GO:0019512">
    <property type="term" value="P:lactose catabolic process via tagatose-6-phosphate"/>
    <property type="evidence" value="ECO:0007669"/>
    <property type="project" value="UniProtKB-UniRule"/>
</dbReference>
<dbReference type="GO" id="GO:0009052">
    <property type="term" value="P:pentose-phosphate shunt, non-oxidative branch"/>
    <property type="evidence" value="ECO:0000318"/>
    <property type="project" value="GO_Central"/>
</dbReference>
<dbReference type="Gene3D" id="3.40.1400.10">
    <property type="entry name" value="Sugar-phosphate isomerase, RpiB/LacA/LacB"/>
    <property type="match status" value="1"/>
</dbReference>
<dbReference type="HAMAP" id="MF_01555">
    <property type="entry name" value="LacA"/>
    <property type="match status" value="1"/>
</dbReference>
<dbReference type="InterPro" id="IPR004783">
    <property type="entry name" value="LacA"/>
</dbReference>
<dbReference type="InterPro" id="IPR003500">
    <property type="entry name" value="RpiB_LacA_LacB"/>
</dbReference>
<dbReference type="InterPro" id="IPR036569">
    <property type="entry name" value="RpiB_LacA_LacB_sf"/>
</dbReference>
<dbReference type="NCBIfam" id="TIGR01118">
    <property type="entry name" value="lacA"/>
    <property type="match status" value="1"/>
</dbReference>
<dbReference type="NCBIfam" id="NF006380">
    <property type="entry name" value="PRK08621.1"/>
    <property type="match status" value="1"/>
</dbReference>
<dbReference type="NCBIfam" id="NF009257">
    <property type="entry name" value="PRK12613.1"/>
    <property type="match status" value="1"/>
</dbReference>
<dbReference type="NCBIfam" id="TIGR00689">
    <property type="entry name" value="rpiB_lacA_lacB"/>
    <property type="match status" value="1"/>
</dbReference>
<dbReference type="PANTHER" id="PTHR30345:SF5">
    <property type="entry name" value="GALACTOSE-6-PHOSPHATE ISOMERASE SUBUNIT LACA"/>
    <property type="match status" value="1"/>
</dbReference>
<dbReference type="PANTHER" id="PTHR30345">
    <property type="entry name" value="RIBOSE-5-PHOSPHATE ISOMERASE B"/>
    <property type="match status" value="1"/>
</dbReference>
<dbReference type="Pfam" id="PF02502">
    <property type="entry name" value="LacAB_rpiB"/>
    <property type="match status" value="1"/>
</dbReference>
<dbReference type="PIRSF" id="PIRSF005384">
    <property type="entry name" value="RpiB_LacA_B"/>
    <property type="match status" value="1"/>
</dbReference>
<dbReference type="SUPFAM" id="SSF89623">
    <property type="entry name" value="Ribose/Galactose isomerase RpiB/AlsB"/>
    <property type="match status" value="1"/>
</dbReference>
<organism>
    <name type="scientific">Streptococcus pneumoniae (strain ATCC BAA-255 / R6)</name>
    <dbReference type="NCBI Taxonomy" id="171101"/>
    <lineage>
        <taxon>Bacteria</taxon>
        <taxon>Bacillati</taxon>
        <taxon>Bacillota</taxon>
        <taxon>Bacilli</taxon>
        <taxon>Lactobacillales</taxon>
        <taxon>Streptococcaceae</taxon>
        <taxon>Streptococcus</taxon>
    </lineage>
</organism>
<keyword id="KW-0413">Isomerase</keyword>
<keyword id="KW-0423">Lactose metabolism</keyword>
<keyword id="KW-1185">Reference proteome</keyword>
<sequence>MSIVIGADAAGLRLKEVVKDFLEKENFHLVDVTAEGQDFVDVTLAVAAEVNKEEQNLGIVIDAYGAGPFMVATKIKGMVAAEVSDERSAYMTRGHNNSRMITMGAQLVGDELAKNIAKGFVNGKYDGGRHQIRVDMLNKMG</sequence>
<feature type="chain" id="PRO_0000208121" description="Galactose-6-phosphate isomerase subunit LacA">
    <location>
        <begin position="1"/>
        <end position="141"/>
    </location>
</feature>
<reference key="1">
    <citation type="journal article" date="2001" name="J. Bacteriol.">
        <title>Genome of the bacterium Streptococcus pneumoniae strain R6.</title>
        <authorList>
            <person name="Hoskins J."/>
            <person name="Alborn W.E. Jr."/>
            <person name="Arnold J."/>
            <person name="Blaszczak L.C."/>
            <person name="Burgett S."/>
            <person name="DeHoff B.S."/>
            <person name="Estrem S.T."/>
            <person name="Fritz L."/>
            <person name="Fu D.-J."/>
            <person name="Fuller W."/>
            <person name="Geringer C."/>
            <person name="Gilmour R."/>
            <person name="Glass J.S."/>
            <person name="Khoja H."/>
            <person name="Kraft A.R."/>
            <person name="Lagace R.E."/>
            <person name="LeBlanc D.J."/>
            <person name="Lee L.N."/>
            <person name="Lefkowitz E.J."/>
            <person name="Lu J."/>
            <person name="Matsushima P."/>
            <person name="McAhren S.M."/>
            <person name="McHenney M."/>
            <person name="McLeaster K."/>
            <person name="Mundy C.W."/>
            <person name="Nicas T.I."/>
            <person name="Norris F.H."/>
            <person name="O'Gara M."/>
            <person name="Peery R.B."/>
            <person name="Robertson G.T."/>
            <person name="Rockey P."/>
            <person name="Sun P.-M."/>
            <person name="Winkler M.E."/>
            <person name="Yang Y."/>
            <person name="Young-Bellido M."/>
            <person name="Zhao G."/>
            <person name="Zook C.A."/>
            <person name="Baltz R.H."/>
            <person name="Jaskunas S.R."/>
            <person name="Rosteck P.R. Jr."/>
            <person name="Skatrud P.L."/>
            <person name="Glass J.I."/>
        </authorList>
    </citation>
    <scope>NUCLEOTIDE SEQUENCE [LARGE SCALE GENOMIC DNA]</scope>
    <source>
        <strain>ATCC BAA-255 / R6</strain>
    </source>
</reference>